<feature type="chain" id="PRO_0000063815" description="Lamin-A">
    <location>
        <begin position="1"/>
        <end position="662"/>
    </location>
</feature>
<feature type="propeptide" id="PRO_0000403466" description="Removed in mature form" evidence="1">
    <location>
        <begin position="663"/>
        <end position="665"/>
    </location>
</feature>
<feature type="domain" description="IF rod" evidence="5">
    <location>
        <begin position="27"/>
        <end position="383"/>
    </location>
</feature>
<feature type="domain" description="LTD" evidence="4">
    <location>
        <begin position="425"/>
        <end position="542"/>
    </location>
</feature>
<feature type="region of interest" description="Head">
    <location>
        <begin position="1"/>
        <end position="29"/>
    </location>
</feature>
<feature type="region of interest" description="Coil 1A">
    <location>
        <begin position="30"/>
        <end position="66"/>
    </location>
</feature>
<feature type="region of interest" description="Linker 1">
    <location>
        <begin position="67"/>
        <end position="76"/>
    </location>
</feature>
<feature type="region of interest" description="Coil 1B">
    <location>
        <begin position="77"/>
        <end position="214"/>
    </location>
</feature>
<feature type="region of interest" description="Linker 2">
    <location>
        <begin position="215"/>
        <end position="238"/>
    </location>
</feature>
<feature type="region of interest" description="Coil 2">
    <location>
        <begin position="239"/>
        <end position="383"/>
    </location>
</feature>
<feature type="region of interest" description="Disordered" evidence="6">
    <location>
        <begin position="381"/>
        <end position="441"/>
    </location>
</feature>
<feature type="region of interest" description="Tail">
    <location>
        <begin position="384"/>
        <end position="664"/>
    </location>
</feature>
<feature type="region of interest" description="Disordered" evidence="6">
    <location>
        <begin position="550"/>
        <end position="581"/>
    </location>
</feature>
<feature type="region of interest" description="Disordered" evidence="6">
    <location>
        <begin position="602"/>
        <end position="641"/>
    </location>
</feature>
<feature type="short sequence motif" description="Nuclear localization signal" evidence="3">
    <location>
        <begin position="413"/>
        <end position="418"/>
    </location>
</feature>
<feature type="compositionally biased region" description="Low complexity" evidence="6">
    <location>
        <begin position="399"/>
        <end position="411"/>
    </location>
</feature>
<feature type="compositionally biased region" description="Polar residues" evidence="6">
    <location>
        <begin position="427"/>
        <end position="436"/>
    </location>
</feature>
<feature type="compositionally biased region" description="Low complexity" evidence="6">
    <location>
        <begin position="605"/>
        <end position="630"/>
    </location>
</feature>
<feature type="modified residue" description="N-acetylmethionine" evidence="1">
    <location>
        <position position="1"/>
    </location>
</feature>
<feature type="modified residue" description="Phosphoserine" evidence="2">
    <location>
        <position position="18"/>
    </location>
</feature>
<feature type="modified residue" description="Phosphoserine" evidence="1">
    <location>
        <position position="388"/>
    </location>
</feature>
<feature type="modified residue" description="Cysteine methyl ester" evidence="1">
    <location>
        <position position="662"/>
    </location>
</feature>
<feature type="lipid moiety-binding region" description="S-farnesyl cysteine" evidence="1">
    <location>
        <position position="662"/>
    </location>
</feature>
<dbReference type="EMBL" id="X06345">
    <property type="protein sequence ID" value="CAA29652.1"/>
    <property type="molecule type" value="mRNA"/>
</dbReference>
<dbReference type="PIR" id="S02358">
    <property type="entry name" value="S02358"/>
</dbReference>
<dbReference type="RefSeq" id="NP_001095210.1">
    <property type="nucleotide sequence ID" value="NM_001101740.1"/>
</dbReference>
<dbReference type="SMR" id="P11048"/>
<dbReference type="GeneID" id="373673"/>
<dbReference type="KEGG" id="xla:373673"/>
<dbReference type="AGR" id="Xenbase:XB-GENE-920728"/>
<dbReference type="CTD" id="373673"/>
<dbReference type="Xenbase" id="XB-GENE-920728">
    <property type="gene designation" value="lmna.L"/>
</dbReference>
<dbReference type="OrthoDB" id="102442at2759"/>
<dbReference type="Proteomes" id="UP000186698">
    <property type="component" value="Chromosome 8L"/>
</dbReference>
<dbReference type="Bgee" id="373673">
    <property type="expression patterns" value="Expressed in stomach and 16 other cell types or tissues"/>
</dbReference>
<dbReference type="GO" id="GO:0005882">
    <property type="term" value="C:intermediate filament"/>
    <property type="evidence" value="ECO:0007669"/>
    <property type="project" value="UniProtKB-KW"/>
</dbReference>
<dbReference type="GO" id="GO:0005635">
    <property type="term" value="C:nuclear envelope"/>
    <property type="evidence" value="ECO:0000314"/>
    <property type="project" value="UniProtKB"/>
</dbReference>
<dbReference type="GO" id="GO:0005652">
    <property type="term" value="C:nuclear lamina"/>
    <property type="evidence" value="ECO:0000314"/>
    <property type="project" value="UniProtKB"/>
</dbReference>
<dbReference type="GO" id="GO:0016363">
    <property type="term" value="C:nuclear matrix"/>
    <property type="evidence" value="ECO:0007669"/>
    <property type="project" value="UniProtKB-SubCell"/>
</dbReference>
<dbReference type="GO" id="GO:0005654">
    <property type="term" value="C:nucleoplasm"/>
    <property type="evidence" value="ECO:0000250"/>
    <property type="project" value="UniProtKB"/>
</dbReference>
<dbReference type="GO" id="GO:0005200">
    <property type="term" value="F:structural constituent of cytoskeleton"/>
    <property type="evidence" value="ECO:0000314"/>
    <property type="project" value="UniProtKB"/>
</dbReference>
<dbReference type="GO" id="GO:0031507">
    <property type="term" value="P:heterochromatin formation"/>
    <property type="evidence" value="ECO:0000318"/>
    <property type="project" value="GO_Central"/>
</dbReference>
<dbReference type="GO" id="GO:0006998">
    <property type="term" value="P:nuclear envelope organization"/>
    <property type="evidence" value="ECO:0000250"/>
    <property type="project" value="UniProtKB"/>
</dbReference>
<dbReference type="GO" id="GO:0007097">
    <property type="term" value="P:nuclear migration"/>
    <property type="evidence" value="ECO:0000318"/>
    <property type="project" value="GO_Central"/>
</dbReference>
<dbReference type="GO" id="GO:0051664">
    <property type="term" value="P:nuclear pore localization"/>
    <property type="evidence" value="ECO:0000318"/>
    <property type="project" value="GO_Central"/>
</dbReference>
<dbReference type="GO" id="GO:0090435">
    <property type="term" value="P:protein localization to nuclear envelope"/>
    <property type="evidence" value="ECO:0000318"/>
    <property type="project" value="GO_Central"/>
</dbReference>
<dbReference type="FunFam" id="1.20.5.170:FF:000033">
    <property type="entry name" value="Lamin A/C"/>
    <property type="match status" value="1"/>
</dbReference>
<dbReference type="FunFam" id="1.20.5.500:FF:000002">
    <property type="entry name" value="Lamin A/C"/>
    <property type="match status" value="1"/>
</dbReference>
<dbReference type="FunFam" id="2.60.40.1260:FF:000001">
    <property type="entry name" value="Lamin A/C"/>
    <property type="match status" value="1"/>
</dbReference>
<dbReference type="FunFam" id="1.20.5.1160:FF:000007">
    <property type="entry name" value="Lamin B1"/>
    <property type="match status" value="1"/>
</dbReference>
<dbReference type="Gene3D" id="1.20.5.170">
    <property type="match status" value="1"/>
</dbReference>
<dbReference type="Gene3D" id="2.60.40.1260">
    <property type="entry name" value="Lamin Tail domain"/>
    <property type="match status" value="1"/>
</dbReference>
<dbReference type="Gene3D" id="1.20.5.500">
    <property type="entry name" value="Single helix bin"/>
    <property type="match status" value="1"/>
</dbReference>
<dbReference type="Gene3D" id="1.20.5.1160">
    <property type="entry name" value="Vasodilator-stimulated phosphoprotein"/>
    <property type="match status" value="2"/>
</dbReference>
<dbReference type="InterPro" id="IPR018039">
    <property type="entry name" value="IF_conserved"/>
</dbReference>
<dbReference type="InterPro" id="IPR039008">
    <property type="entry name" value="IF_rod_dom"/>
</dbReference>
<dbReference type="InterPro" id="IPR001322">
    <property type="entry name" value="Lamin_tail_dom"/>
</dbReference>
<dbReference type="InterPro" id="IPR036415">
    <property type="entry name" value="Lamin_tail_dom_sf"/>
</dbReference>
<dbReference type="PANTHER" id="PTHR45721">
    <property type="entry name" value="LAMIN DM0-RELATED"/>
    <property type="match status" value="1"/>
</dbReference>
<dbReference type="PANTHER" id="PTHR45721:SF5">
    <property type="entry name" value="PRELAMIN-A_C"/>
    <property type="match status" value="1"/>
</dbReference>
<dbReference type="Pfam" id="PF00038">
    <property type="entry name" value="Filament"/>
    <property type="match status" value="1"/>
</dbReference>
<dbReference type="Pfam" id="PF00932">
    <property type="entry name" value="LTD"/>
    <property type="match status" value="1"/>
</dbReference>
<dbReference type="SMART" id="SM01391">
    <property type="entry name" value="Filament"/>
    <property type="match status" value="1"/>
</dbReference>
<dbReference type="SUPFAM" id="SSF64593">
    <property type="entry name" value="Intermediate filament protein, coiled coil region"/>
    <property type="match status" value="2"/>
</dbReference>
<dbReference type="SUPFAM" id="SSF74853">
    <property type="entry name" value="Lamin A/C globular tail domain"/>
    <property type="match status" value="1"/>
</dbReference>
<dbReference type="PROSITE" id="PS00226">
    <property type="entry name" value="IF_ROD_1"/>
    <property type="match status" value="1"/>
</dbReference>
<dbReference type="PROSITE" id="PS51842">
    <property type="entry name" value="IF_ROD_2"/>
    <property type="match status" value="1"/>
</dbReference>
<dbReference type="PROSITE" id="PS51841">
    <property type="entry name" value="LTD"/>
    <property type="match status" value="1"/>
</dbReference>
<gene>
    <name type="primary">lmna</name>
</gene>
<evidence type="ECO:0000250" key="1">
    <source>
        <dbReference type="UniProtKB" id="P02545"/>
    </source>
</evidence>
<evidence type="ECO:0000250" key="2">
    <source>
        <dbReference type="UniProtKB" id="P14732"/>
    </source>
</evidence>
<evidence type="ECO:0000255" key="3"/>
<evidence type="ECO:0000255" key="4">
    <source>
        <dbReference type="PROSITE-ProRule" id="PRU01187"/>
    </source>
</evidence>
<evidence type="ECO:0000255" key="5">
    <source>
        <dbReference type="PROSITE-ProRule" id="PRU01188"/>
    </source>
</evidence>
<evidence type="ECO:0000256" key="6">
    <source>
        <dbReference type="SAM" id="MobiDB-lite"/>
    </source>
</evidence>
<evidence type="ECO:0000269" key="7">
    <source>
    </source>
</evidence>
<evidence type="ECO:0000269" key="8">
    <source>
    </source>
</evidence>
<protein>
    <recommendedName>
        <fullName>Lamin-A</fullName>
    </recommendedName>
</protein>
<reference key="1">
    <citation type="journal article" date="1987" name="EMBO J.">
        <title>A new lamin in Xenopus somatic tissues displays strong homology to human lamin A.</title>
        <authorList>
            <person name="Wolin S.L."/>
            <person name="Krohne G."/>
            <person name="Kirschner M.W."/>
        </authorList>
    </citation>
    <scope>NUCLEOTIDE SEQUENCE [MRNA]</scope>
</reference>
<reference key="2">
    <citation type="journal article" date="1992" name="Chromosoma">
        <title>The gene structure of Xenopus nuclear lamin A: a model for the evolution of A-type from B-type lamins by exon shuffling.</title>
        <authorList>
            <person name="Stick R."/>
        </authorList>
    </citation>
    <scope>NUCLEOTIDE SEQUENCE [MRNA]</scope>
</reference>
<reference key="3">
    <citation type="journal article" date="2014" name="Proc. Natl. Acad. Sci. U.S.A.">
        <title>Custos controls beta-catenin to regulate head development during vertebrate embryogenesis.</title>
        <authorList>
            <person name="Komiya Y."/>
            <person name="Mandrekar N."/>
            <person name="Sato A."/>
            <person name="Dawid I.B."/>
            <person name="Habas R."/>
        </authorList>
    </citation>
    <scope>SUBCELLULAR LOCATION</scope>
</reference>
<reference key="4">
    <citation type="journal article" date="1986" name="Nature">
        <title>The nuclear lamina is a meshwork of intermediate-type filaments.</title>
        <authorList>
            <person name="Aebi U."/>
            <person name="Cohn J."/>
            <person name="Buhle L."/>
            <person name="Gerace L."/>
        </authorList>
    </citation>
    <scope>FUNCTION</scope>
    <scope>SUBCELLULAR LOCATION</scope>
</reference>
<accession>P11048</accession>
<proteinExistence type="evidence at transcript level"/>
<organism>
    <name type="scientific">Xenopus laevis</name>
    <name type="common">African clawed frog</name>
    <dbReference type="NCBI Taxonomy" id="8355"/>
    <lineage>
        <taxon>Eukaryota</taxon>
        <taxon>Metazoa</taxon>
        <taxon>Chordata</taxon>
        <taxon>Craniata</taxon>
        <taxon>Vertebrata</taxon>
        <taxon>Euteleostomi</taxon>
        <taxon>Amphibia</taxon>
        <taxon>Batrachia</taxon>
        <taxon>Anura</taxon>
        <taxon>Pipoidea</taxon>
        <taxon>Pipidae</taxon>
        <taxon>Xenopodinae</taxon>
        <taxon>Xenopus</taxon>
        <taxon>Xenopus</taxon>
    </lineage>
</organism>
<comment type="function">
    <text evidence="1 8">Lamins are intermediate filament proteins that assemble into a filamentous meshwork, and which constitute the major components of the nuclear lamina, a fibrous layer on the nucleoplasmic side of the inner nuclear membrane (PubMed:3762708). Lamins provide a framework for the nuclear envelope, bridging the nuclear envelope and chromatin, thereby playing an important role in nuclear assembly, chromatin organization, nuclear membrane and telomere dynamics (By similarity). The structural integrity of the lamina is strictly controlled by the cell cycle, as seen by the disintegration and formation of the nuclear envelope in prophase and telophase, respectively (By similarity).</text>
</comment>
<comment type="subunit">
    <text evidence="1">Homodimer. Lamin dimers then assemble into dimeric head-to-tail polymers. Ultimately, two head-to-tail polymers assemble laterally into a protofilament with a uniformly shaped rod of 3.5 nm in diameter.</text>
</comment>
<comment type="subcellular location">
    <subcellularLocation>
        <location evidence="8">Nucleus lamina</location>
    </subcellularLocation>
    <subcellularLocation>
        <location evidence="7">Nucleus envelope</location>
    </subcellularLocation>
    <subcellularLocation>
        <location evidence="7">Nucleus</location>
        <location evidence="7">Nucleoplasm</location>
    </subcellularLocation>
    <subcellularLocation>
        <location evidence="1">Nucleus matrix</location>
    </subcellularLocation>
</comment>
<comment type="PTM">
    <text evidence="2">Phosphorylation plays a key role in lamin organization, subcellular localization and nuclear envelope disintegration. Phosphorylation by CDK1 at Ser-18 at the onset of mitosis drives lamin disassembly and nuclear envelope breakdown.</text>
</comment>
<comment type="miscellaneous">
    <text>There are at least five different lamins in Xenopus: the somatic lamins L(I)/lmnb1.S, L(II)/lmnb2.L, and A/lmna.L; the oocyte germinal vesicle lamin L(III)/lmnb3.L; and the male germ cells lamin l(IV).</text>
</comment>
<comment type="similarity">
    <text evidence="5">Belongs to the intermediate filament family.</text>
</comment>
<sequence length="665" mass="74919">METPGQKRATRSTHTPLSPTRITRLQEKEDLQGLNDRLAVYIDKVRSLELENARLRLRITESEDVISREVTGIKSAYETELADARKTLDSVAKERARLQLELSKIREEHKELKARNAKKESDLLTAQARLKDLEALLNSKDAALTTALGEKRNLENEIRELKAHIAKLEASLADTKKQLQDEMLRRVDTENRNQTLKEELEFQKSIYNEEMRETKRRHETRLVEVDNGRQREFESKLADALHELRAQHEGQIGLYKEELGKTYNAKLENAKQSAERNSSLVGEAQEEIQQSRIRIDSLSAQLSQLQKQLAAREAKLRDLEDAYARERDSSRRLLADKDREMAEMRARMQQQLDEYQELLDIKLALDMEINAYRKLLEGEEERLRLSPSPNTQKRSARTIASHSGAHISSSASKRRRLEEGESRSSSFTQHARTTGKVSVEEVDPEGKYVRLRNKSNEDQSLGNWQIKRQIGDETPIVYKFPPRLTLKAGQTVTIWASGAGATNSPPSDLVWKAQSSWGTGDSIRTALLTSSNEEVAMRKLVRTVVINDEDDEDNDDMEHHHHHHHHHHDGQNSSGDPGEYNLRSRTIVCTSCGRPAEKSVLASQGSGLVTGSSGSSSSSVTLTRTYRSTGGTSGGSGLGESPVTRNFIVGNGQRAQVAPQNCSIM</sequence>
<keyword id="KW-0007">Acetylation</keyword>
<keyword id="KW-0175">Coiled coil</keyword>
<keyword id="KW-0403">Intermediate filament</keyword>
<keyword id="KW-0449">Lipoprotein</keyword>
<keyword id="KW-0488">Methylation</keyword>
<keyword id="KW-0539">Nucleus</keyword>
<keyword id="KW-0597">Phosphoprotein</keyword>
<keyword id="KW-0636">Prenylation</keyword>
<keyword id="KW-1185">Reference proteome</keyword>
<name>LMNA_XENLA</name>